<gene>
    <name evidence="1" type="primary">fmt</name>
    <name type="ordered locus">YPDSF_0163</name>
</gene>
<accession>A4TH22</accession>
<reference key="1">
    <citation type="submission" date="2007-02" db="EMBL/GenBank/DDBJ databases">
        <title>Complete sequence of chromosome of Yersinia pestis Pestoides F.</title>
        <authorList>
            <consortium name="US DOE Joint Genome Institute"/>
            <person name="Copeland A."/>
            <person name="Lucas S."/>
            <person name="Lapidus A."/>
            <person name="Barry K."/>
            <person name="Detter J.C."/>
            <person name="Glavina del Rio T."/>
            <person name="Hammon N."/>
            <person name="Israni S."/>
            <person name="Dalin E."/>
            <person name="Tice H."/>
            <person name="Pitluck S."/>
            <person name="Di Bartolo G."/>
            <person name="Chain P."/>
            <person name="Malfatti S."/>
            <person name="Shin M."/>
            <person name="Vergez L."/>
            <person name="Schmutz J."/>
            <person name="Larimer F."/>
            <person name="Land M."/>
            <person name="Hauser L."/>
            <person name="Worsham P."/>
            <person name="Chu M."/>
            <person name="Bearden S."/>
            <person name="Garcia E."/>
            <person name="Richardson P."/>
        </authorList>
    </citation>
    <scope>NUCLEOTIDE SEQUENCE [LARGE SCALE GENOMIC DNA]</scope>
    <source>
        <strain>Pestoides F</strain>
    </source>
</reference>
<keyword id="KW-0648">Protein biosynthesis</keyword>
<keyword id="KW-0808">Transferase</keyword>
<proteinExistence type="inferred from homology"/>
<protein>
    <recommendedName>
        <fullName evidence="1">Methionyl-tRNA formyltransferase</fullName>
        <ecNumber evidence="1">2.1.2.9</ecNumber>
    </recommendedName>
</protein>
<sequence>MSDSLRIIFAGTPDFAARHLGALLSSQHKIVGVFTQPDRPAGRGNKLTPSPVKILAEHHGIPVFQPKSLRPEENQHLVADLNADIMVVVAYGLILPAAVLAMPRLGCINVHGSLLPRWRGAAPIQRSVWAGDEKTGITIMQMDIGLDTGAMLHKIECAIQPEDTSATLYDKLAQLGPQGLLITLQQLAAGTALAEVQNETQATYAEKLSKEEAKLDWTLSATQLERCIRAFNPWPVSYFIVDEQPIKVWQAQVLPAGEDAEPGTIIHADKHGIQVATADGVLNITQLQPAGKKAMSAADLLNSRREWFIPGSQLV</sequence>
<evidence type="ECO:0000255" key="1">
    <source>
        <dbReference type="HAMAP-Rule" id="MF_00182"/>
    </source>
</evidence>
<feature type="chain" id="PRO_1000020209" description="Methionyl-tRNA formyltransferase">
    <location>
        <begin position="1"/>
        <end position="315"/>
    </location>
</feature>
<feature type="binding site" evidence="1">
    <location>
        <begin position="113"/>
        <end position="116"/>
    </location>
    <ligand>
        <name>(6S)-5,6,7,8-tetrahydrofolate</name>
        <dbReference type="ChEBI" id="CHEBI:57453"/>
    </ligand>
</feature>
<name>FMT_YERPP</name>
<comment type="function">
    <text evidence="1">Attaches a formyl group to the free amino group of methionyl-tRNA(fMet). The formyl group appears to play a dual role in the initiator identity of N-formylmethionyl-tRNA by promoting its recognition by IF2 and preventing the misappropriation of this tRNA by the elongation apparatus.</text>
</comment>
<comment type="catalytic activity">
    <reaction evidence="1">
        <text>L-methionyl-tRNA(fMet) + (6R)-10-formyltetrahydrofolate = N-formyl-L-methionyl-tRNA(fMet) + (6S)-5,6,7,8-tetrahydrofolate + H(+)</text>
        <dbReference type="Rhea" id="RHEA:24380"/>
        <dbReference type="Rhea" id="RHEA-COMP:9952"/>
        <dbReference type="Rhea" id="RHEA-COMP:9953"/>
        <dbReference type="ChEBI" id="CHEBI:15378"/>
        <dbReference type="ChEBI" id="CHEBI:57453"/>
        <dbReference type="ChEBI" id="CHEBI:78530"/>
        <dbReference type="ChEBI" id="CHEBI:78844"/>
        <dbReference type="ChEBI" id="CHEBI:195366"/>
        <dbReference type="EC" id="2.1.2.9"/>
    </reaction>
</comment>
<comment type="similarity">
    <text evidence="1">Belongs to the Fmt family.</text>
</comment>
<organism>
    <name type="scientific">Yersinia pestis (strain Pestoides F)</name>
    <dbReference type="NCBI Taxonomy" id="386656"/>
    <lineage>
        <taxon>Bacteria</taxon>
        <taxon>Pseudomonadati</taxon>
        <taxon>Pseudomonadota</taxon>
        <taxon>Gammaproteobacteria</taxon>
        <taxon>Enterobacterales</taxon>
        <taxon>Yersiniaceae</taxon>
        <taxon>Yersinia</taxon>
    </lineage>
</organism>
<dbReference type="EC" id="2.1.2.9" evidence="1"/>
<dbReference type="EMBL" id="CP000668">
    <property type="protein sequence ID" value="ABP38585.1"/>
    <property type="molecule type" value="Genomic_DNA"/>
</dbReference>
<dbReference type="RefSeq" id="WP_002209020.1">
    <property type="nucleotide sequence ID" value="NZ_CP009715.1"/>
</dbReference>
<dbReference type="SMR" id="A4TH22"/>
<dbReference type="GeneID" id="57974363"/>
<dbReference type="KEGG" id="ypp:YPDSF_0163"/>
<dbReference type="PATRIC" id="fig|386656.14.peg.402"/>
<dbReference type="GO" id="GO:0005829">
    <property type="term" value="C:cytosol"/>
    <property type="evidence" value="ECO:0007669"/>
    <property type="project" value="TreeGrafter"/>
</dbReference>
<dbReference type="GO" id="GO:0004479">
    <property type="term" value="F:methionyl-tRNA formyltransferase activity"/>
    <property type="evidence" value="ECO:0007669"/>
    <property type="project" value="UniProtKB-UniRule"/>
</dbReference>
<dbReference type="CDD" id="cd08646">
    <property type="entry name" value="FMT_core_Met-tRNA-FMT_N"/>
    <property type="match status" value="1"/>
</dbReference>
<dbReference type="CDD" id="cd08704">
    <property type="entry name" value="Met_tRNA_FMT_C"/>
    <property type="match status" value="1"/>
</dbReference>
<dbReference type="FunFam" id="3.10.25.10:FF:000001">
    <property type="entry name" value="Methionyl-tRNA formyltransferase"/>
    <property type="match status" value="1"/>
</dbReference>
<dbReference type="FunFam" id="3.40.50.12230:FF:000001">
    <property type="entry name" value="Methionyl-tRNA formyltransferase"/>
    <property type="match status" value="1"/>
</dbReference>
<dbReference type="FunFam" id="3.40.50.170:FF:000003">
    <property type="entry name" value="Methionyl-tRNA formyltransferase"/>
    <property type="match status" value="1"/>
</dbReference>
<dbReference type="Gene3D" id="3.10.25.10">
    <property type="entry name" value="Formyl transferase, C-terminal domain"/>
    <property type="match status" value="1"/>
</dbReference>
<dbReference type="Gene3D" id="3.40.50.170">
    <property type="entry name" value="Formyl transferase, N-terminal domain"/>
    <property type="match status" value="1"/>
</dbReference>
<dbReference type="HAMAP" id="MF_00182">
    <property type="entry name" value="Formyl_trans"/>
    <property type="match status" value="1"/>
</dbReference>
<dbReference type="InterPro" id="IPR005794">
    <property type="entry name" value="Fmt"/>
</dbReference>
<dbReference type="InterPro" id="IPR005793">
    <property type="entry name" value="Formyl_trans_C"/>
</dbReference>
<dbReference type="InterPro" id="IPR037022">
    <property type="entry name" value="Formyl_trans_C_sf"/>
</dbReference>
<dbReference type="InterPro" id="IPR002376">
    <property type="entry name" value="Formyl_transf_N"/>
</dbReference>
<dbReference type="InterPro" id="IPR036477">
    <property type="entry name" value="Formyl_transf_N_sf"/>
</dbReference>
<dbReference type="InterPro" id="IPR011034">
    <property type="entry name" value="Formyl_transferase-like_C_sf"/>
</dbReference>
<dbReference type="InterPro" id="IPR001555">
    <property type="entry name" value="GART_AS"/>
</dbReference>
<dbReference type="InterPro" id="IPR044135">
    <property type="entry name" value="Met-tRNA-FMT_C"/>
</dbReference>
<dbReference type="InterPro" id="IPR041711">
    <property type="entry name" value="Met-tRNA-FMT_N"/>
</dbReference>
<dbReference type="NCBIfam" id="TIGR00460">
    <property type="entry name" value="fmt"/>
    <property type="match status" value="1"/>
</dbReference>
<dbReference type="PANTHER" id="PTHR11138">
    <property type="entry name" value="METHIONYL-TRNA FORMYLTRANSFERASE"/>
    <property type="match status" value="1"/>
</dbReference>
<dbReference type="PANTHER" id="PTHR11138:SF5">
    <property type="entry name" value="METHIONYL-TRNA FORMYLTRANSFERASE, MITOCHONDRIAL"/>
    <property type="match status" value="1"/>
</dbReference>
<dbReference type="Pfam" id="PF02911">
    <property type="entry name" value="Formyl_trans_C"/>
    <property type="match status" value="1"/>
</dbReference>
<dbReference type="Pfam" id="PF00551">
    <property type="entry name" value="Formyl_trans_N"/>
    <property type="match status" value="1"/>
</dbReference>
<dbReference type="SUPFAM" id="SSF50486">
    <property type="entry name" value="FMT C-terminal domain-like"/>
    <property type="match status" value="1"/>
</dbReference>
<dbReference type="SUPFAM" id="SSF53328">
    <property type="entry name" value="Formyltransferase"/>
    <property type="match status" value="1"/>
</dbReference>
<dbReference type="PROSITE" id="PS00373">
    <property type="entry name" value="GART"/>
    <property type="match status" value="1"/>
</dbReference>